<reference key="1">
    <citation type="submission" date="2005-08" db="EMBL/GenBank/DDBJ databases">
        <authorList>
            <consortium name="NIH - Mammalian Gene Collection (MGC) project"/>
        </authorList>
    </citation>
    <scope>NUCLEOTIDE SEQUENCE [LARGE SCALE MRNA]</scope>
    <source>
        <strain>Crossbred X Angus</strain>
        <tissue>Ileum</tissue>
    </source>
</reference>
<reference key="2">
    <citation type="journal article" date="2002" name="Structure">
        <title>The structure of the mammalian 20S proteasome at 2.75 A resolution.</title>
        <authorList>
            <person name="Unno M."/>
            <person name="Mizushima T."/>
            <person name="Morimoto Y."/>
            <person name="Tomisugi Y."/>
            <person name="Tanaka K."/>
            <person name="Yasuoka N."/>
            <person name="Tsukihara T."/>
        </authorList>
    </citation>
    <scope>X-RAY CRYSTALLOGRAPHY (2.75 ANGSTROMS) OF COMPLEX WITH THE 20S PROTEASOME</scope>
</reference>
<keyword id="KW-0002">3D-structure</keyword>
<keyword id="KW-0007">Acetylation</keyword>
<keyword id="KW-0963">Cytoplasm</keyword>
<keyword id="KW-0325">Glycoprotein</keyword>
<keyword id="KW-0539">Nucleus</keyword>
<keyword id="KW-0597">Phosphoprotein</keyword>
<keyword id="KW-0647">Proteasome</keyword>
<keyword id="KW-1185">Reference proteome</keyword>
<organism>
    <name type="scientific">Bos taurus</name>
    <name type="common">Bovine</name>
    <dbReference type="NCBI Taxonomy" id="9913"/>
    <lineage>
        <taxon>Eukaryota</taxon>
        <taxon>Metazoa</taxon>
        <taxon>Chordata</taxon>
        <taxon>Craniata</taxon>
        <taxon>Vertebrata</taxon>
        <taxon>Euteleostomi</taxon>
        <taxon>Mammalia</taxon>
        <taxon>Eutheria</taxon>
        <taxon>Laurasiatheria</taxon>
        <taxon>Artiodactyla</taxon>
        <taxon>Ruminantia</taxon>
        <taxon>Pecora</taxon>
        <taxon>Bovidae</taxon>
        <taxon>Bovinae</taxon>
        <taxon>Bos</taxon>
    </lineage>
</organism>
<sequence>MSYDRAITVFSPDGHLFQVEYAQEAVKKGSTAVGVRGKDIVVLGVEKKSVAKLQDERTVRKICALDDNVCMAFAGLTADARIVINRARVECQSHRLTVEDPVTVEYITRYIASLKQRYTQSNGRRPFGISALIVGFDFDGTPRLYQTDPSGTYHAWKANAIGRGAKSVREFLEKNYTDEAIETDDLTIKLVIKALLEVVQSGGKNIELAVMRRDQPLKILNPEEIEKYVAEIEKEKEENEKKKQKKAS</sequence>
<name>PSA7_BOVIN</name>
<feature type="chain" id="PRO_0000274035" description="Proteasome subunit alpha type-7">
    <location>
        <begin position="1"/>
        <end position="248"/>
    </location>
</feature>
<feature type="modified residue" description="Phosphotyrosine" evidence="2">
    <location>
        <position position="153"/>
    </location>
</feature>
<feature type="modified residue" description="N6-acetyllysine" evidence="2">
    <location>
        <position position="227"/>
    </location>
</feature>
<feature type="glycosylation site" description="O-linked (GlcNAc) serine" evidence="1">
    <location>
        <position position="130"/>
    </location>
</feature>
<feature type="helix" evidence="6">
    <location>
        <begin position="17"/>
        <end position="27"/>
    </location>
</feature>
<feature type="strand" evidence="6">
    <location>
        <begin position="32"/>
        <end position="36"/>
    </location>
</feature>
<feature type="strand" evidence="6">
    <location>
        <begin position="38"/>
        <end position="46"/>
    </location>
</feature>
<feature type="strand" evidence="6">
    <location>
        <begin position="52"/>
        <end position="54"/>
    </location>
</feature>
<feature type="helix" evidence="6">
    <location>
        <begin position="56"/>
        <end position="59"/>
    </location>
</feature>
<feature type="strand" evidence="6">
    <location>
        <begin position="61"/>
        <end position="75"/>
    </location>
</feature>
<feature type="helix" evidence="6">
    <location>
        <begin position="77"/>
        <end position="97"/>
    </location>
</feature>
<feature type="strand" evidence="6">
    <location>
        <begin position="98"/>
        <end position="100"/>
    </location>
</feature>
<feature type="helix" evidence="6">
    <location>
        <begin position="104"/>
        <end position="119"/>
    </location>
</feature>
<feature type="strand" evidence="6">
    <location>
        <begin position="129"/>
        <end position="136"/>
    </location>
</feature>
<feature type="strand" evidence="5">
    <location>
        <begin position="138"/>
        <end position="140"/>
    </location>
</feature>
<feature type="strand" evidence="6">
    <location>
        <begin position="142"/>
        <end position="147"/>
    </location>
</feature>
<feature type="strand" evidence="6">
    <location>
        <begin position="153"/>
        <end position="162"/>
    </location>
</feature>
<feature type="helix" evidence="6">
    <location>
        <begin position="165"/>
        <end position="175"/>
    </location>
</feature>
<feature type="helix" evidence="6">
    <location>
        <begin position="179"/>
        <end position="181"/>
    </location>
</feature>
<feature type="helix" evidence="6">
    <location>
        <begin position="184"/>
        <end position="196"/>
    </location>
</feature>
<feature type="strand" evidence="6">
    <location>
        <begin position="200"/>
        <end position="212"/>
    </location>
</feature>
<feature type="helix" evidence="6">
    <location>
        <begin position="222"/>
        <end position="243"/>
    </location>
</feature>
<gene>
    <name type="primary">PSMA7</name>
</gene>
<dbReference type="EMBL" id="BC103328">
    <property type="protein sequence ID" value="AAI03329.1"/>
    <property type="molecule type" value="mRNA"/>
</dbReference>
<dbReference type="RefSeq" id="NP_001029405.1">
    <property type="nucleotide sequence ID" value="NM_001034233.2"/>
</dbReference>
<dbReference type="PDB" id="1IRU">
    <property type="method" value="X-ray"/>
    <property type="resolution" value="2.75 A"/>
    <property type="chains" value="D/R=1-248"/>
</dbReference>
<dbReference type="PDB" id="7DR6">
    <property type="method" value="EM"/>
    <property type="resolution" value="4.10 A"/>
    <property type="chains" value="O/a=1-248"/>
</dbReference>
<dbReference type="PDB" id="7DR7">
    <property type="method" value="EM"/>
    <property type="resolution" value="3.30 A"/>
    <property type="chains" value="A/O=1-248"/>
</dbReference>
<dbReference type="PDB" id="7DRW">
    <property type="method" value="EM"/>
    <property type="resolution" value="4.20 A"/>
    <property type="chains" value="D/P=1-248"/>
</dbReference>
<dbReference type="PDB" id="8AZK">
    <property type="method" value="EM"/>
    <property type="resolution" value="3.10 A"/>
    <property type="chains" value="D/R=1-248"/>
</dbReference>
<dbReference type="PDB" id="8FZ5">
    <property type="method" value="EM"/>
    <property type="resolution" value="2.23 A"/>
    <property type="chains" value="D/R=1-248"/>
</dbReference>
<dbReference type="PDB" id="8FZ6">
    <property type="method" value="EM"/>
    <property type="resolution" value="2.54 A"/>
    <property type="chains" value="D/R=1-248"/>
</dbReference>
<dbReference type="PDBsum" id="1IRU"/>
<dbReference type="PDBsum" id="7DR6"/>
<dbReference type="PDBsum" id="7DR7"/>
<dbReference type="PDBsum" id="7DRW"/>
<dbReference type="PDBsum" id="8AZK"/>
<dbReference type="PDBsum" id="8FZ5"/>
<dbReference type="PDBsum" id="8FZ6"/>
<dbReference type="EMDB" id="EMD-15767"/>
<dbReference type="EMDB" id="EMD-29603"/>
<dbReference type="EMDB" id="EMD-29604"/>
<dbReference type="EMDB" id="EMD-30824"/>
<dbReference type="EMDB" id="EMD-30825"/>
<dbReference type="EMDB" id="EMD-30828"/>
<dbReference type="SMR" id="Q3ZBG0"/>
<dbReference type="FunCoup" id="Q3ZBG0">
    <property type="interactions" value="2350"/>
</dbReference>
<dbReference type="STRING" id="9913.ENSBTAP00000006760"/>
<dbReference type="GlyCosmos" id="Q3ZBG0">
    <property type="glycosylation" value="1 site, No reported glycans"/>
</dbReference>
<dbReference type="GlyGen" id="Q3ZBG0">
    <property type="glycosylation" value="1 site"/>
</dbReference>
<dbReference type="PaxDb" id="9913-ENSBTAP00000006760"/>
<dbReference type="PeptideAtlas" id="Q3ZBG0"/>
<dbReference type="Ensembl" id="ENSBTAT00000006760.5">
    <property type="protein sequence ID" value="ENSBTAP00000006760.3"/>
    <property type="gene ID" value="ENSBTAG00000005127.5"/>
</dbReference>
<dbReference type="GeneID" id="505050"/>
<dbReference type="KEGG" id="bta:505050"/>
<dbReference type="CTD" id="5688"/>
<dbReference type="VEuPathDB" id="HostDB:ENSBTAG00000005127"/>
<dbReference type="VGNC" id="VGNC:33442">
    <property type="gene designation" value="PSMA7"/>
</dbReference>
<dbReference type="eggNOG" id="KOG0183">
    <property type="taxonomic scope" value="Eukaryota"/>
</dbReference>
<dbReference type="GeneTree" id="ENSGT00940000159695"/>
<dbReference type="HOGENOM" id="CLU_035750_4_0_1"/>
<dbReference type="InParanoid" id="Q3ZBG0"/>
<dbReference type="OMA" id="ICMLDHH"/>
<dbReference type="OrthoDB" id="3145928at2759"/>
<dbReference type="TreeFam" id="TF106212"/>
<dbReference type="Reactome" id="R-BTA-1169091">
    <property type="pathway name" value="Activation of NF-kappaB in B cells"/>
</dbReference>
<dbReference type="Reactome" id="R-BTA-1234176">
    <property type="pathway name" value="Oxygen-dependent proline hydroxylation of Hypoxia-inducible Factor Alpha"/>
</dbReference>
<dbReference type="Reactome" id="R-BTA-1236978">
    <property type="pathway name" value="Cross-presentation of soluble exogenous antigens (endosomes)"/>
</dbReference>
<dbReference type="Reactome" id="R-BTA-174084">
    <property type="pathway name" value="Autodegradation of Cdh1 by Cdh1:APC/C"/>
</dbReference>
<dbReference type="Reactome" id="R-BTA-174154">
    <property type="pathway name" value="APC/C:Cdc20 mediated degradation of Securin"/>
</dbReference>
<dbReference type="Reactome" id="R-BTA-174178">
    <property type="pathway name" value="APC/C:Cdh1 mediated degradation of Cdc20 and other APC/C:Cdh1 targeted proteins in late mitosis/early G1"/>
</dbReference>
<dbReference type="Reactome" id="R-BTA-174184">
    <property type="pathway name" value="Cdc20:Phospho-APC/C mediated degradation of Cyclin A"/>
</dbReference>
<dbReference type="Reactome" id="R-BTA-187577">
    <property type="pathway name" value="SCF(Skp2)-mediated degradation of p27/p21"/>
</dbReference>
<dbReference type="Reactome" id="R-BTA-195253">
    <property type="pathway name" value="Degradation of beta-catenin by the destruction complex"/>
</dbReference>
<dbReference type="Reactome" id="R-BTA-202424">
    <property type="pathway name" value="Downstream TCR signaling"/>
</dbReference>
<dbReference type="Reactome" id="R-BTA-2467813">
    <property type="pathway name" value="Separation of Sister Chromatids"/>
</dbReference>
<dbReference type="Reactome" id="R-BTA-2871837">
    <property type="pathway name" value="FCERI mediated NF-kB activation"/>
</dbReference>
<dbReference type="Reactome" id="R-BTA-349425">
    <property type="pathway name" value="Autodegradation of the E3 ubiquitin ligase COP1"/>
</dbReference>
<dbReference type="Reactome" id="R-BTA-350562">
    <property type="pathway name" value="Regulation of ornithine decarboxylase (ODC)"/>
</dbReference>
<dbReference type="Reactome" id="R-BTA-382556">
    <property type="pathway name" value="ABC-family proteins mediated transport"/>
</dbReference>
<dbReference type="Reactome" id="R-BTA-450408">
    <property type="pathway name" value="AUF1 (hnRNP D0) binds and destabilizes mRNA"/>
</dbReference>
<dbReference type="Reactome" id="R-BTA-4608870">
    <property type="pathway name" value="Asymmetric localization of PCP proteins"/>
</dbReference>
<dbReference type="Reactome" id="R-BTA-4641257">
    <property type="pathway name" value="Degradation of AXIN"/>
</dbReference>
<dbReference type="Reactome" id="R-BTA-4641258">
    <property type="pathway name" value="Degradation of DVL"/>
</dbReference>
<dbReference type="Reactome" id="R-BTA-5358346">
    <property type="pathway name" value="Hedgehog ligand biogenesis"/>
</dbReference>
<dbReference type="Reactome" id="R-BTA-5607761">
    <property type="pathway name" value="Dectin-1 mediated noncanonical NF-kB signaling"/>
</dbReference>
<dbReference type="Reactome" id="R-BTA-5607764">
    <property type="pathway name" value="CLEC7A (Dectin-1) signaling"/>
</dbReference>
<dbReference type="Reactome" id="R-BTA-5610780">
    <property type="pathway name" value="Degradation of GLI1 by the proteasome"/>
</dbReference>
<dbReference type="Reactome" id="R-BTA-5610785">
    <property type="pathway name" value="GLI3 is processed to GLI3R by the proteasome"/>
</dbReference>
<dbReference type="Reactome" id="R-BTA-5632684">
    <property type="pathway name" value="Hedgehog 'on' state"/>
</dbReference>
<dbReference type="Reactome" id="R-BTA-5668541">
    <property type="pathway name" value="TNFR2 non-canonical NF-kB pathway"/>
</dbReference>
<dbReference type="Reactome" id="R-BTA-5676590">
    <property type="pathway name" value="NIK--&gt;noncanonical NF-kB signaling"/>
</dbReference>
<dbReference type="Reactome" id="R-BTA-5687128">
    <property type="pathway name" value="MAPK6/MAPK4 signaling"/>
</dbReference>
<dbReference type="Reactome" id="R-BTA-5689603">
    <property type="pathway name" value="UCH proteinases"/>
</dbReference>
<dbReference type="Reactome" id="R-BTA-5689880">
    <property type="pathway name" value="Ub-specific processing proteases"/>
</dbReference>
<dbReference type="Reactome" id="R-BTA-68867">
    <property type="pathway name" value="Assembly of the pre-replicative complex"/>
</dbReference>
<dbReference type="Reactome" id="R-BTA-68949">
    <property type="pathway name" value="Orc1 removal from chromatin"/>
</dbReference>
<dbReference type="Reactome" id="R-BTA-69017">
    <property type="pathway name" value="CDK-mediated phosphorylation and removal of Cdc6"/>
</dbReference>
<dbReference type="Reactome" id="R-BTA-69481">
    <property type="pathway name" value="G2/M Checkpoints"/>
</dbReference>
<dbReference type="Reactome" id="R-BTA-69601">
    <property type="pathway name" value="Ubiquitin Mediated Degradation of Phosphorylated Cdc25A"/>
</dbReference>
<dbReference type="Reactome" id="R-BTA-75815">
    <property type="pathway name" value="Ubiquitin-dependent degradation of Cyclin D"/>
</dbReference>
<dbReference type="Reactome" id="R-BTA-8852276">
    <property type="pathway name" value="The role of GTSE1 in G2/M progression after G2 checkpoint"/>
</dbReference>
<dbReference type="Reactome" id="R-BTA-8854050">
    <property type="pathway name" value="FBXL7 down-regulates AURKA during mitotic entry and in early mitosis"/>
</dbReference>
<dbReference type="Reactome" id="R-BTA-8939236">
    <property type="pathway name" value="RUNX1 regulates transcription of genes involved in differentiation of HSCs"/>
</dbReference>
<dbReference type="Reactome" id="R-BTA-8939902">
    <property type="pathway name" value="Regulation of RUNX2 expression and activity"/>
</dbReference>
<dbReference type="Reactome" id="R-BTA-8941858">
    <property type="pathway name" value="Regulation of RUNX3 expression and activity"/>
</dbReference>
<dbReference type="Reactome" id="R-BTA-8948751">
    <property type="pathway name" value="Regulation of PTEN stability and activity"/>
</dbReference>
<dbReference type="Reactome" id="R-BTA-8951664">
    <property type="pathway name" value="Neddylation"/>
</dbReference>
<dbReference type="Reactome" id="R-BTA-9020702">
    <property type="pathway name" value="Interleukin-1 signaling"/>
</dbReference>
<dbReference type="Reactome" id="R-BTA-9755511">
    <property type="pathway name" value="KEAP1-NFE2L2 pathway"/>
</dbReference>
<dbReference type="Reactome" id="R-BTA-9762114">
    <property type="pathway name" value="GSK3B and BTRC:CUL1-mediated-degradation of NFE2L2"/>
</dbReference>
<dbReference type="Reactome" id="R-BTA-983168">
    <property type="pathway name" value="Antigen processing: Ubiquitination &amp; Proteasome degradation"/>
</dbReference>
<dbReference type="Reactome" id="R-BTA-9907900">
    <property type="pathway name" value="Proteasome assembly"/>
</dbReference>
<dbReference type="EvolutionaryTrace" id="Q3ZBG0"/>
<dbReference type="Proteomes" id="UP000009136">
    <property type="component" value="Chromosome 13"/>
</dbReference>
<dbReference type="Bgee" id="ENSBTAG00000005127">
    <property type="expression patterns" value="Expressed in oocyte and 103 other cell types or tissues"/>
</dbReference>
<dbReference type="GO" id="GO:0005829">
    <property type="term" value="C:cytosol"/>
    <property type="evidence" value="ECO:0000304"/>
    <property type="project" value="Reactome"/>
</dbReference>
<dbReference type="GO" id="GO:0005634">
    <property type="term" value="C:nucleus"/>
    <property type="evidence" value="ECO:0000318"/>
    <property type="project" value="GO_Central"/>
</dbReference>
<dbReference type="GO" id="GO:0005839">
    <property type="term" value="C:proteasome core complex"/>
    <property type="evidence" value="ECO:0000250"/>
    <property type="project" value="UniProtKB"/>
</dbReference>
<dbReference type="GO" id="GO:0019773">
    <property type="term" value="C:proteasome core complex, alpha-subunit complex"/>
    <property type="evidence" value="ECO:0000250"/>
    <property type="project" value="UniProtKB"/>
</dbReference>
<dbReference type="GO" id="GO:0043161">
    <property type="term" value="P:proteasome-mediated ubiquitin-dependent protein catabolic process"/>
    <property type="evidence" value="ECO:0000318"/>
    <property type="project" value="GO_Central"/>
</dbReference>
<dbReference type="CDD" id="cd03755">
    <property type="entry name" value="proteasome_alpha_type_7"/>
    <property type="match status" value="1"/>
</dbReference>
<dbReference type="FunFam" id="3.60.20.10:FF:000018">
    <property type="entry name" value="Proteasome subunit alpha type"/>
    <property type="match status" value="1"/>
</dbReference>
<dbReference type="Gene3D" id="3.60.20.10">
    <property type="entry name" value="Glutamine Phosphoribosylpyrophosphate, subunit 1, domain 1"/>
    <property type="match status" value="1"/>
</dbReference>
<dbReference type="InterPro" id="IPR029055">
    <property type="entry name" value="Ntn_hydrolases_N"/>
</dbReference>
<dbReference type="InterPro" id="IPR050115">
    <property type="entry name" value="Proteasome_alpha"/>
</dbReference>
<dbReference type="InterPro" id="IPR023332">
    <property type="entry name" value="Proteasome_alpha-type"/>
</dbReference>
<dbReference type="InterPro" id="IPR000426">
    <property type="entry name" value="Proteasome_asu_N"/>
</dbReference>
<dbReference type="InterPro" id="IPR001353">
    <property type="entry name" value="Proteasome_sua/b"/>
</dbReference>
<dbReference type="NCBIfam" id="NF003075">
    <property type="entry name" value="PRK03996.1"/>
    <property type="match status" value="1"/>
</dbReference>
<dbReference type="PANTHER" id="PTHR11599">
    <property type="entry name" value="PROTEASOME SUBUNIT ALPHA/BETA"/>
    <property type="match status" value="1"/>
</dbReference>
<dbReference type="Pfam" id="PF00227">
    <property type="entry name" value="Proteasome"/>
    <property type="match status" value="1"/>
</dbReference>
<dbReference type="Pfam" id="PF10584">
    <property type="entry name" value="Proteasome_A_N"/>
    <property type="match status" value="1"/>
</dbReference>
<dbReference type="SMART" id="SM00948">
    <property type="entry name" value="Proteasome_A_N"/>
    <property type="match status" value="1"/>
</dbReference>
<dbReference type="SUPFAM" id="SSF56235">
    <property type="entry name" value="N-terminal nucleophile aminohydrolases (Ntn hydrolases)"/>
    <property type="match status" value="1"/>
</dbReference>
<dbReference type="PROSITE" id="PS00388">
    <property type="entry name" value="PROTEASOME_ALPHA_1"/>
    <property type="match status" value="1"/>
</dbReference>
<dbReference type="PROSITE" id="PS51475">
    <property type="entry name" value="PROTEASOME_ALPHA_2"/>
    <property type="match status" value="1"/>
</dbReference>
<accession>Q3ZBG0</accession>
<proteinExistence type="evidence at protein level"/>
<evidence type="ECO:0000250" key="1"/>
<evidence type="ECO:0000250" key="2">
    <source>
        <dbReference type="UniProtKB" id="O14818"/>
    </source>
</evidence>
<evidence type="ECO:0000255" key="3">
    <source>
        <dbReference type="PROSITE-ProRule" id="PRU00808"/>
    </source>
</evidence>
<evidence type="ECO:0000269" key="4">
    <source>
    </source>
</evidence>
<evidence type="ECO:0007829" key="5">
    <source>
        <dbReference type="PDB" id="1IRU"/>
    </source>
</evidence>
<evidence type="ECO:0007829" key="6">
    <source>
        <dbReference type="PDB" id="8FZ5"/>
    </source>
</evidence>
<protein>
    <recommendedName>
        <fullName>Proteasome subunit alpha type-7</fullName>
    </recommendedName>
</protein>
<comment type="function">
    <text evidence="2">Component of the 20S core proteasome complex involved in the proteolytic degradation of most intracellular proteins. This complex plays numerous essential roles within the cell by associating with different regulatory particles. Associated with two 19S regulatory particles, forms the 26S proteasome and thus participates in the ATP-dependent degradation of ubiquitinated proteins. The 26S proteasome plays a key role in the maintenance of protein homeostasis by removing misfolded or damaged proteins that could impair cellular functions, and by removing proteins whose functions are no longer required. Associated with the PA200 or PA28, the 20S proteasome mediates ubiquitin-independent protein degradation. This type of proteolysis is required in several pathways including spermatogenesis (20S-PA200 complex) or generation of a subset of MHC class I-presented antigenic peptides (20S-PA28 complex). Inhibits the transactivation function of HIF-1A under both normoxic and hypoxia-mimicking conditions. The interaction with EMAP2 increases the proteasome-mediated HIF-1A degradation under the hypoxic conditions. Plays a role in hepatitis C virus internal ribosome entry site-mediated translation. Mediates nuclear translocation of the androgen receptor (AR) and thereby enhances androgen-mediated transactivation. Promotes MAVS degradation and thereby negatively regulates MAVS-mediated innate immune response.</text>
</comment>
<comment type="subunit">
    <text evidence="2 4">The 26S proteasome consists of a 20S proteasome core and two 19S regulatory subunits. The 20S proteasome core is a barrel-shaped complex made of 28 subunits that are arranged in four stacked rings. The two outer rings are each formed by seven alpha subunits, and the two inner rings are formed by seven beta subunits. The proteolytic activity is exerted by three beta-subunits PSMB5, PSMB6 and PSMB7 (PubMed:12015144). PSMA7 interacts directly with the PSMG1-PSMG2 heterodimer which promotes 20S proteasome assembly (By similarity). Interacts with HIF1A (By similarity). Interacts with RAB7A (By similarity). Interacts with PRKN (By similarity). Interacts with ABL1 and ABL2 (By similarity). Interacts with EMAP2 (By similarity). Interacts with MAVS (By similarity).</text>
</comment>
<comment type="subcellular location">
    <subcellularLocation>
        <location evidence="2">Cytoplasm</location>
    </subcellularLocation>
    <subcellularLocation>
        <location evidence="2">Nucleus</location>
    </subcellularLocation>
    <text evidence="2">Translocated from the cytoplasm into the nucleus following interaction with AKIRIN2, which bridges the proteasome with the nuclear import receptor IPO9.</text>
</comment>
<comment type="similarity">
    <text evidence="3">Belongs to the peptidase T1A family.</text>
</comment>